<reference key="1">
    <citation type="submission" date="2009-03" db="EMBL/GenBank/DDBJ databases">
        <title>Brucella melitensis ATCC 23457 whole genome shotgun sequencing project.</title>
        <authorList>
            <person name="Setubal J.C."/>
            <person name="Boyle S."/>
            <person name="Crasta O.R."/>
            <person name="Gillespie J.J."/>
            <person name="Kenyon R.W."/>
            <person name="Lu J."/>
            <person name="Mane S."/>
            <person name="Nagrani S."/>
            <person name="Shallom J.M."/>
            <person name="Shallom S."/>
            <person name="Shukla M."/>
            <person name="Snyder E.E."/>
            <person name="Sobral B.W."/>
            <person name="Wattam A.R."/>
            <person name="Will R."/>
            <person name="Williams K."/>
            <person name="Yoo H."/>
            <person name="Munk C."/>
            <person name="Tapia R."/>
            <person name="Han C."/>
            <person name="Detter J.C."/>
            <person name="Bruce D."/>
            <person name="Brettin T.S."/>
        </authorList>
    </citation>
    <scope>NUCLEOTIDE SEQUENCE [LARGE SCALE GENOMIC DNA]</scope>
    <source>
        <strain>ATCC 23457</strain>
    </source>
</reference>
<comment type="function">
    <text evidence="1">Plays a role in cell envelope biogenesis, maintenance of cell envelope integrity and membrane homeostasis.</text>
</comment>
<comment type="subcellular location">
    <subcellularLocation>
        <location evidence="1">Cell inner membrane</location>
        <topology evidence="1">Multi-pass membrane protein</topology>
    </subcellularLocation>
</comment>
<comment type="similarity">
    <text evidence="1">Belongs to the YciB family.</text>
</comment>
<protein>
    <recommendedName>
        <fullName evidence="1">Inner membrane-spanning protein YciB</fullName>
    </recommendedName>
</protein>
<evidence type="ECO:0000255" key="1">
    <source>
        <dbReference type="HAMAP-Rule" id="MF_00189"/>
    </source>
</evidence>
<feature type="chain" id="PRO_1000124249" description="Inner membrane-spanning protein YciB">
    <location>
        <begin position="1"/>
        <end position="220"/>
    </location>
</feature>
<feature type="transmembrane region" description="Helical" evidence="1">
    <location>
        <begin position="20"/>
        <end position="40"/>
    </location>
</feature>
<feature type="transmembrane region" description="Helical" evidence="1">
    <location>
        <begin position="57"/>
        <end position="77"/>
    </location>
</feature>
<feature type="transmembrane region" description="Helical" evidence="1">
    <location>
        <begin position="86"/>
        <end position="106"/>
    </location>
</feature>
<feature type="transmembrane region" description="Helical" evidence="1">
    <location>
        <begin position="123"/>
        <end position="143"/>
    </location>
</feature>
<feature type="transmembrane region" description="Helical" evidence="1">
    <location>
        <begin position="156"/>
        <end position="176"/>
    </location>
</feature>
<feature type="transmembrane region" description="Helical" evidence="1">
    <location>
        <begin position="187"/>
        <end position="207"/>
    </location>
</feature>
<organism>
    <name type="scientific">Brucella melitensis biotype 2 (strain ATCC 23457)</name>
    <dbReference type="NCBI Taxonomy" id="546272"/>
    <lineage>
        <taxon>Bacteria</taxon>
        <taxon>Pseudomonadati</taxon>
        <taxon>Pseudomonadota</taxon>
        <taxon>Alphaproteobacteria</taxon>
        <taxon>Hyphomicrobiales</taxon>
        <taxon>Brucellaceae</taxon>
        <taxon>Brucella/Ochrobactrum group</taxon>
        <taxon>Brucella</taxon>
    </lineage>
</organism>
<gene>
    <name evidence="1" type="primary">yciB</name>
    <name type="ordered locus">BMEA_A1992</name>
</gene>
<sequence>MEHPVFKRDPSEKSETERREVPPLLKLALELGPLLVFFFANARGEMLIERFPILGSIGAPIFLATALFMAATVIALAISWSMTRTLPIMPLVSGIVVLVFGALTLWLHNDTFIKMKPTIVNTLFGGILLGGLFFGKSLLGYVFDSAFRLDAEGWRKLTLRWALFFIFLAIVNEIVWRNFSTDTWVSFKVWGIMPITIVFTLLQMPLIQKHSLTDEENTAS</sequence>
<dbReference type="EMBL" id="CP001488">
    <property type="protein sequence ID" value="ACO01652.1"/>
    <property type="molecule type" value="Genomic_DNA"/>
</dbReference>
<dbReference type="RefSeq" id="WP_004686251.1">
    <property type="nucleotide sequence ID" value="NC_012441.1"/>
</dbReference>
<dbReference type="SMR" id="C0RFI0"/>
<dbReference type="KEGG" id="bmi:BMEA_A1992"/>
<dbReference type="HOGENOM" id="CLU_089554_1_1_5"/>
<dbReference type="Proteomes" id="UP000001748">
    <property type="component" value="Chromosome I"/>
</dbReference>
<dbReference type="GO" id="GO:0005886">
    <property type="term" value="C:plasma membrane"/>
    <property type="evidence" value="ECO:0007669"/>
    <property type="project" value="UniProtKB-SubCell"/>
</dbReference>
<dbReference type="HAMAP" id="MF_00189">
    <property type="entry name" value="YciB"/>
    <property type="match status" value="1"/>
</dbReference>
<dbReference type="InterPro" id="IPR006008">
    <property type="entry name" value="YciB"/>
</dbReference>
<dbReference type="NCBIfam" id="TIGR00997">
    <property type="entry name" value="ispZ"/>
    <property type="match status" value="1"/>
</dbReference>
<dbReference type="NCBIfam" id="NF001323">
    <property type="entry name" value="PRK00259.1-1"/>
    <property type="match status" value="1"/>
</dbReference>
<dbReference type="PANTHER" id="PTHR36917:SF1">
    <property type="entry name" value="INNER MEMBRANE-SPANNING PROTEIN YCIB"/>
    <property type="match status" value="1"/>
</dbReference>
<dbReference type="PANTHER" id="PTHR36917">
    <property type="entry name" value="INTRACELLULAR SEPTATION PROTEIN A-RELATED"/>
    <property type="match status" value="1"/>
</dbReference>
<dbReference type="Pfam" id="PF04279">
    <property type="entry name" value="IspA"/>
    <property type="match status" value="1"/>
</dbReference>
<proteinExistence type="inferred from homology"/>
<accession>C0RFI0</accession>
<name>YCIB_BRUMB</name>
<keyword id="KW-0997">Cell inner membrane</keyword>
<keyword id="KW-1003">Cell membrane</keyword>
<keyword id="KW-0472">Membrane</keyword>
<keyword id="KW-0812">Transmembrane</keyword>
<keyword id="KW-1133">Transmembrane helix</keyword>